<feature type="chain" id="PRO_1000204307" description="Dihydroorotate dehydrogenase B (NAD(+)), catalytic subunit">
    <location>
        <begin position="1"/>
        <end position="313"/>
    </location>
</feature>
<feature type="active site" description="Nucleophile">
    <location>
        <position position="130"/>
    </location>
</feature>
<feature type="binding site" evidence="1">
    <location>
        <position position="21"/>
    </location>
    <ligand>
        <name>FMN</name>
        <dbReference type="ChEBI" id="CHEBI:58210"/>
    </ligand>
</feature>
<feature type="binding site" evidence="1">
    <location>
        <begin position="45"/>
        <end position="46"/>
    </location>
    <ligand>
        <name>FMN</name>
        <dbReference type="ChEBI" id="CHEBI:58210"/>
    </ligand>
</feature>
<feature type="binding site" evidence="1">
    <location>
        <position position="45"/>
    </location>
    <ligand>
        <name>substrate</name>
    </ligand>
</feature>
<feature type="binding site" evidence="1">
    <location>
        <begin position="69"/>
        <end position="73"/>
    </location>
    <ligand>
        <name>substrate</name>
    </ligand>
</feature>
<feature type="binding site" evidence="1">
    <location>
        <position position="99"/>
    </location>
    <ligand>
        <name>FMN</name>
        <dbReference type="ChEBI" id="CHEBI:58210"/>
    </ligand>
</feature>
<feature type="binding site" evidence="1">
    <location>
        <position position="127"/>
    </location>
    <ligand>
        <name>FMN</name>
        <dbReference type="ChEBI" id="CHEBI:58210"/>
    </ligand>
</feature>
<feature type="binding site" evidence="1">
    <location>
        <position position="127"/>
    </location>
    <ligand>
        <name>substrate</name>
    </ligand>
</feature>
<feature type="binding site" evidence="1">
    <location>
        <position position="165"/>
    </location>
    <ligand>
        <name>FMN</name>
        <dbReference type="ChEBI" id="CHEBI:58210"/>
    </ligand>
</feature>
<feature type="binding site" evidence="1">
    <location>
        <position position="191"/>
    </location>
    <ligand>
        <name>FMN</name>
        <dbReference type="ChEBI" id="CHEBI:58210"/>
    </ligand>
</feature>
<feature type="binding site" evidence="1">
    <location>
        <begin position="192"/>
        <end position="193"/>
    </location>
    <ligand>
        <name>substrate</name>
    </ligand>
</feature>
<feature type="binding site" evidence="1">
    <location>
        <position position="217"/>
    </location>
    <ligand>
        <name>FMN</name>
        <dbReference type="ChEBI" id="CHEBI:58210"/>
    </ligand>
</feature>
<feature type="binding site" evidence="1">
    <location>
        <begin position="243"/>
        <end position="244"/>
    </location>
    <ligand>
        <name>FMN</name>
        <dbReference type="ChEBI" id="CHEBI:58210"/>
    </ligand>
</feature>
<feature type="binding site" evidence="1">
    <location>
        <begin position="265"/>
        <end position="266"/>
    </location>
    <ligand>
        <name>FMN</name>
        <dbReference type="ChEBI" id="CHEBI:58210"/>
    </ligand>
</feature>
<name>PYRDB_GEOSW</name>
<reference key="1">
    <citation type="submission" date="2009-06" db="EMBL/GenBank/DDBJ databases">
        <title>Complete sequence of chromosome of Geopacillus sp. WCH70.</title>
        <authorList>
            <consortium name="US DOE Joint Genome Institute"/>
            <person name="Lucas S."/>
            <person name="Copeland A."/>
            <person name="Lapidus A."/>
            <person name="Glavina del Rio T."/>
            <person name="Dalin E."/>
            <person name="Tice H."/>
            <person name="Bruce D."/>
            <person name="Goodwin L."/>
            <person name="Pitluck S."/>
            <person name="Chertkov O."/>
            <person name="Brettin T."/>
            <person name="Detter J.C."/>
            <person name="Han C."/>
            <person name="Larimer F."/>
            <person name="Land M."/>
            <person name="Hauser L."/>
            <person name="Kyrpides N."/>
            <person name="Mikhailova N."/>
            <person name="Brumm P."/>
            <person name="Mead D.A."/>
            <person name="Richardson P."/>
        </authorList>
    </citation>
    <scope>NUCLEOTIDE SEQUENCE [LARGE SCALE GENOMIC DNA]</scope>
    <source>
        <strain>WCH70</strain>
    </source>
</reference>
<gene>
    <name type="primary">pyrD</name>
    <name type="ordered locus">GWCH70_1049</name>
</gene>
<comment type="function">
    <text evidence="1">Catalyzes the conversion of dihydroorotate to orotate with NAD(+) as electron acceptor.</text>
</comment>
<comment type="catalytic activity">
    <reaction>
        <text>(S)-dihydroorotate + NAD(+) = orotate + NADH + H(+)</text>
        <dbReference type="Rhea" id="RHEA:13513"/>
        <dbReference type="ChEBI" id="CHEBI:15378"/>
        <dbReference type="ChEBI" id="CHEBI:30839"/>
        <dbReference type="ChEBI" id="CHEBI:30864"/>
        <dbReference type="ChEBI" id="CHEBI:57540"/>
        <dbReference type="ChEBI" id="CHEBI:57945"/>
        <dbReference type="EC" id="1.3.1.14"/>
    </reaction>
</comment>
<comment type="cofactor">
    <cofactor evidence="1">
        <name>FMN</name>
        <dbReference type="ChEBI" id="CHEBI:58210"/>
    </cofactor>
    <text evidence="1">Binds 1 FMN per subunit.</text>
</comment>
<comment type="pathway">
    <text>Pyrimidine metabolism; UMP biosynthesis via de novo pathway; orotate from (S)-dihydroorotate (NAD(+) route): step 1/1.</text>
</comment>
<comment type="subunit">
    <text evidence="1">Heterotetramer of 2 PyrK and 2 PyrD type B subunits.</text>
</comment>
<comment type="subcellular location">
    <subcellularLocation>
        <location evidence="1">Cytoplasm</location>
    </subcellularLocation>
</comment>
<comment type="similarity">
    <text evidence="2">Belongs to the dihydroorotate dehydrogenase family. Type 1 subfamily.</text>
</comment>
<protein>
    <recommendedName>
        <fullName>Dihydroorotate dehydrogenase B (NAD(+)), catalytic subunit</fullName>
        <shortName>DHOD B</shortName>
        <shortName>DHODase B</shortName>
        <shortName>DHOdehase B</shortName>
        <ecNumber>1.3.1.14</ecNumber>
    </recommendedName>
    <alternativeName>
        <fullName>Dihydroorotate oxidase B</fullName>
    </alternativeName>
    <alternativeName>
        <fullName>Orotate reductase (NADH)</fullName>
    </alternativeName>
</protein>
<sequence length="313" mass="33318">MNRLAVELPGLSLKNPIMPASGCFGFGREYAQFYDLSKLGAIMIKATTKEPRFGNPTPRVAETPGGMLNAIGLQNPGLQKVLEEELPWLAQFDVPIIANVAGSTMEEYVEVAKHISKAPNVHALELNISCPNVKKGGIAFGTVPEIAAELTKLVKEVSEVPVYVKLSPNVTNIVEMAKAIEAAGADGLTMINTLLGMRIDVKTAKPILANRTGGLSGPAIKPIAIRMIYEVSQAVSIPIIGMGGIQSAEDVIEFFYAGASAVAIGTANFIDPFVCPNIIAELPVLLDELGIDHISECMGRSWKKGERSVYCGA</sequence>
<organism>
    <name type="scientific">Geobacillus sp. (strain WCH70)</name>
    <dbReference type="NCBI Taxonomy" id="471223"/>
    <lineage>
        <taxon>Bacteria</taxon>
        <taxon>Bacillati</taxon>
        <taxon>Bacillota</taxon>
        <taxon>Bacilli</taxon>
        <taxon>Bacillales</taxon>
        <taxon>Anoxybacillaceae</taxon>
        <taxon>Geobacillus</taxon>
    </lineage>
</organism>
<keyword id="KW-0963">Cytoplasm</keyword>
<keyword id="KW-0285">Flavoprotein</keyword>
<keyword id="KW-0288">FMN</keyword>
<keyword id="KW-0520">NAD</keyword>
<keyword id="KW-0560">Oxidoreductase</keyword>
<keyword id="KW-0665">Pyrimidine biosynthesis</keyword>
<dbReference type="EC" id="1.3.1.14"/>
<dbReference type="EMBL" id="CP001638">
    <property type="protein sequence ID" value="ACS23909.1"/>
    <property type="molecule type" value="Genomic_DNA"/>
</dbReference>
<dbReference type="SMR" id="C5D8Q2"/>
<dbReference type="STRING" id="471223.GWCH70_1049"/>
<dbReference type="KEGG" id="gwc:GWCH70_1049"/>
<dbReference type="eggNOG" id="COG0167">
    <property type="taxonomic scope" value="Bacteria"/>
</dbReference>
<dbReference type="HOGENOM" id="CLU_042042_0_0_9"/>
<dbReference type="OrthoDB" id="9794954at2"/>
<dbReference type="UniPathway" id="UPA00070">
    <property type="reaction ID" value="UER00945"/>
</dbReference>
<dbReference type="GO" id="GO:0005737">
    <property type="term" value="C:cytoplasm"/>
    <property type="evidence" value="ECO:0007669"/>
    <property type="project" value="UniProtKB-SubCell"/>
</dbReference>
<dbReference type="GO" id="GO:0004589">
    <property type="term" value="F:dihydroorotate dehydrogenase (NAD+) activity"/>
    <property type="evidence" value="ECO:0007669"/>
    <property type="project" value="UniProtKB-EC"/>
</dbReference>
<dbReference type="GO" id="GO:0006207">
    <property type="term" value="P:'de novo' pyrimidine nucleobase biosynthetic process"/>
    <property type="evidence" value="ECO:0007669"/>
    <property type="project" value="InterPro"/>
</dbReference>
<dbReference type="GO" id="GO:0044205">
    <property type="term" value="P:'de novo' UMP biosynthetic process"/>
    <property type="evidence" value="ECO:0007669"/>
    <property type="project" value="UniProtKB-UniRule"/>
</dbReference>
<dbReference type="CDD" id="cd04740">
    <property type="entry name" value="DHOD_1B_like"/>
    <property type="match status" value="1"/>
</dbReference>
<dbReference type="FunFam" id="3.20.20.70:FF:000069">
    <property type="entry name" value="Dihydroorotate dehydrogenase"/>
    <property type="match status" value="1"/>
</dbReference>
<dbReference type="Gene3D" id="3.20.20.70">
    <property type="entry name" value="Aldolase class I"/>
    <property type="match status" value="1"/>
</dbReference>
<dbReference type="HAMAP" id="MF_00224">
    <property type="entry name" value="DHO_dh_type1"/>
    <property type="match status" value="1"/>
</dbReference>
<dbReference type="InterPro" id="IPR013785">
    <property type="entry name" value="Aldolase_TIM"/>
</dbReference>
<dbReference type="InterPro" id="IPR050074">
    <property type="entry name" value="DHO_dehydrogenase"/>
</dbReference>
<dbReference type="InterPro" id="IPR033888">
    <property type="entry name" value="DHOD_1B"/>
</dbReference>
<dbReference type="InterPro" id="IPR024920">
    <property type="entry name" value="Dihydroorotate_DH_1"/>
</dbReference>
<dbReference type="InterPro" id="IPR012135">
    <property type="entry name" value="Dihydroorotate_DH_1_2"/>
</dbReference>
<dbReference type="InterPro" id="IPR005720">
    <property type="entry name" value="Dihydroorotate_DH_cat"/>
</dbReference>
<dbReference type="InterPro" id="IPR001295">
    <property type="entry name" value="Dihydroorotate_DH_CS"/>
</dbReference>
<dbReference type="InterPro" id="IPR049622">
    <property type="entry name" value="Dihydroorotate_DH_I"/>
</dbReference>
<dbReference type="NCBIfam" id="NF005574">
    <property type="entry name" value="PRK07259.1"/>
    <property type="match status" value="1"/>
</dbReference>
<dbReference type="NCBIfam" id="TIGR01037">
    <property type="entry name" value="pyrD_sub1_fam"/>
    <property type="match status" value="1"/>
</dbReference>
<dbReference type="PANTHER" id="PTHR48109:SF1">
    <property type="entry name" value="DIHYDROOROTATE DEHYDROGENASE (FUMARATE)"/>
    <property type="match status" value="1"/>
</dbReference>
<dbReference type="PANTHER" id="PTHR48109">
    <property type="entry name" value="DIHYDROOROTATE DEHYDROGENASE (QUINONE), MITOCHONDRIAL-RELATED"/>
    <property type="match status" value="1"/>
</dbReference>
<dbReference type="Pfam" id="PF01180">
    <property type="entry name" value="DHO_dh"/>
    <property type="match status" value="1"/>
</dbReference>
<dbReference type="PIRSF" id="PIRSF000164">
    <property type="entry name" value="DHO_oxidase"/>
    <property type="match status" value="1"/>
</dbReference>
<dbReference type="SUPFAM" id="SSF51395">
    <property type="entry name" value="FMN-linked oxidoreductases"/>
    <property type="match status" value="1"/>
</dbReference>
<dbReference type="PROSITE" id="PS00911">
    <property type="entry name" value="DHODEHASE_1"/>
    <property type="match status" value="1"/>
</dbReference>
<dbReference type="PROSITE" id="PS00912">
    <property type="entry name" value="DHODEHASE_2"/>
    <property type="match status" value="1"/>
</dbReference>
<accession>C5D8Q2</accession>
<evidence type="ECO:0000250" key="1"/>
<evidence type="ECO:0000305" key="2"/>
<proteinExistence type="inferred from homology"/>